<protein>
    <recommendedName>
        <fullName>GATA transcription factor 16</fullName>
    </recommendedName>
</protein>
<dbReference type="EMBL" id="AB016872">
    <property type="protein sequence ID" value="BAB10348.1"/>
    <property type="molecule type" value="Genomic_DNA"/>
</dbReference>
<dbReference type="EMBL" id="CP002688">
    <property type="protein sequence ID" value="AED95794.1"/>
    <property type="molecule type" value="Genomic_DNA"/>
</dbReference>
<dbReference type="EMBL" id="BT029338">
    <property type="protein sequence ID" value="ABK32152.1"/>
    <property type="molecule type" value="mRNA"/>
</dbReference>
<dbReference type="RefSeq" id="NP_199741.1">
    <property type="nucleotide sequence ID" value="NM_124307.3"/>
</dbReference>
<dbReference type="SMR" id="Q9FJ10"/>
<dbReference type="BioGRID" id="20236">
    <property type="interactions" value="6"/>
</dbReference>
<dbReference type="FunCoup" id="Q9FJ10">
    <property type="interactions" value="1"/>
</dbReference>
<dbReference type="IntAct" id="Q9FJ10">
    <property type="interactions" value="4"/>
</dbReference>
<dbReference type="STRING" id="3702.Q9FJ10"/>
<dbReference type="PaxDb" id="3702-AT5G49300.1"/>
<dbReference type="EnsemblPlants" id="AT5G49300.1">
    <property type="protein sequence ID" value="AT5G49300.1"/>
    <property type="gene ID" value="AT5G49300"/>
</dbReference>
<dbReference type="GeneID" id="834990"/>
<dbReference type="Gramene" id="AT5G49300.1">
    <property type="protein sequence ID" value="AT5G49300.1"/>
    <property type="gene ID" value="AT5G49300"/>
</dbReference>
<dbReference type="KEGG" id="ath:AT5G49300"/>
<dbReference type="Araport" id="AT5G49300"/>
<dbReference type="TAIR" id="AT5G49300">
    <property type="gene designation" value="GATA16"/>
</dbReference>
<dbReference type="eggNOG" id="KOG1601">
    <property type="taxonomic scope" value="Eukaryota"/>
</dbReference>
<dbReference type="HOGENOM" id="CLU_060197_1_1_1"/>
<dbReference type="InParanoid" id="Q9FJ10"/>
<dbReference type="OMA" id="IKKTCAN"/>
<dbReference type="OrthoDB" id="2162994at2759"/>
<dbReference type="PhylomeDB" id="Q9FJ10"/>
<dbReference type="PRO" id="PR:Q9FJ10"/>
<dbReference type="Proteomes" id="UP000006548">
    <property type="component" value="Chromosome 5"/>
</dbReference>
<dbReference type="ExpressionAtlas" id="Q9FJ10">
    <property type="expression patterns" value="baseline and differential"/>
</dbReference>
<dbReference type="GO" id="GO:0005634">
    <property type="term" value="C:nucleus"/>
    <property type="evidence" value="ECO:0007669"/>
    <property type="project" value="UniProtKB-SubCell"/>
</dbReference>
<dbReference type="GO" id="GO:0003700">
    <property type="term" value="F:DNA-binding transcription factor activity"/>
    <property type="evidence" value="ECO:0000250"/>
    <property type="project" value="TAIR"/>
</dbReference>
<dbReference type="GO" id="GO:0000976">
    <property type="term" value="F:transcription cis-regulatory region binding"/>
    <property type="evidence" value="ECO:0000353"/>
    <property type="project" value="TAIR"/>
</dbReference>
<dbReference type="GO" id="GO:0008270">
    <property type="term" value="F:zinc ion binding"/>
    <property type="evidence" value="ECO:0007669"/>
    <property type="project" value="UniProtKB-KW"/>
</dbReference>
<dbReference type="CDD" id="cd00202">
    <property type="entry name" value="ZnF_GATA"/>
    <property type="match status" value="1"/>
</dbReference>
<dbReference type="FunFam" id="3.30.50.10:FF:000055">
    <property type="entry name" value="GATA transcription factor 21"/>
    <property type="match status" value="1"/>
</dbReference>
<dbReference type="Gene3D" id="3.30.50.10">
    <property type="entry name" value="Erythroid Transcription Factor GATA-1, subunit A"/>
    <property type="match status" value="1"/>
</dbReference>
<dbReference type="InterPro" id="IPR000679">
    <property type="entry name" value="Znf_GATA"/>
</dbReference>
<dbReference type="InterPro" id="IPR013088">
    <property type="entry name" value="Znf_NHR/GATA"/>
</dbReference>
<dbReference type="PANTHER" id="PTHR47172:SF18">
    <property type="entry name" value="GATA TRANSCRIPTION FACTOR 16"/>
    <property type="match status" value="1"/>
</dbReference>
<dbReference type="PANTHER" id="PTHR47172">
    <property type="entry name" value="OS01G0976800 PROTEIN"/>
    <property type="match status" value="1"/>
</dbReference>
<dbReference type="Pfam" id="PF00320">
    <property type="entry name" value="GATA"/>
    <property type="match status" value="1"/>
</dbReference>
<dbReference type="SMART" id="SM00401">
    <property type="entry name" value="ZnF_GATA"/>
    <property type="match status" value="1"/>
</dbReference>
<dbReference type="SUPFAM" id="SSF57716">
    <property type="entry name" value="Glucocorticoid receptor-like (DNA-binding domain)"/>
    <property type="match status" value="1"/>
</dbReference>
<dbReference type="PROSITE" id="PS00344">
    <property type="entry name" value="GATA_ZN_FINGER_1"/>
    <property type="match status" value="1"/>
</dbReference>
<dbReference type="PROSITE" id="PS50114">
    <property type="entry name" value="GATA_ZN_FINGER_2"/>
    <property type="match status" value="1"/>
</dbReference>
<keyword id="KW-0238">DNA-binding</keyword>
<keyword id="KW-0479">Metal-binding</keyword>
<keyword id="KW-0539">Nucleus</keyword>
<keyword id="KW-1185">Reference proteome</keyword>
<keyword id="KW-0804">Transcription</keyword>
<keyword id="KW-0805">Transcription regulation</keyword>
<keyword id="KW-0862">Zinc</keyword>
<keyword id="KW-0863">Zinc-finger</keyword>
<evidence type="ECO:0000250" key="1"/>
<evidence type="ECO:0000255" key="2">
    <source>
        <dbReference type="PROSITE-ProRule" id="PRU00094"/>
    </source>
</evidence>
<evidence type="ECO:0000256" key="3">
    <source>
        <dbReference type="SAM" id="MobiDB-lite"/>
    </source>
</evidence>
<evidence type="ECO:0000305" key="4"/>
<name>GAT16_ARATH</name>
<reference key="1">
    <citation type="journal article" date="1998" name="DNA Res.">
        <title>Structural analysis of Arabidopsis thaliana chromosome 5. VIII. Sequence features of the regions of 1,081,958 bp covered by seventeen physically assigned P1 and TAC clones.</title>
        <authorList>
            <person name="Asamizu E."/>
            <person name="Sato S."/>
            <person name="Kaneko T."/>
            <person name="Nakamura Y."/>
            <person name="Kotani H."/>
            <person name="Miyajima N."/>
            <person name="Tabata S."/>
        </authorList>
    </citation>
    <scope>NUCLEOTIDE SEQUENCE [LARGE SCALE GENOMIC DNA]</scope>
    <source>
        <strain>cv. Columbia</strain>
    </source>
</reference>
<reference key="2">
    <citation type="journal article" date="2017" name="Plant J.">
        <title>Araport11: a complete reannotation of the Arabidopsis thaliana reference genome.</title>
        <authorList>
            <person name="Cheng C.Y."/>
            <person name="Krishnakumar V."/>
            <person name="Chan A.P."/>
            <person name="Thibaud-Nissen F."/>
            <person name="Schobel S."/>
            <person name="Town C.D."/>
        </authorList>
    </citation>
    <scope>GENOME REANNOTATION</scope>
    <source>
        <strain>cv. Columbia</strain>
    </source>
</reference>
<reference key="3">
    <citation type="submission" date="2006-11" db="EMBL/GenBank/DDBJ databases">
        <title>Arabidopsis ORF clones.</title>
        <authorList>
            <person name="Bautista V.R."/>
            <person name="Kim C.J."/>
            <person name="Chen H."/>
            <person name="Quinitio C."/>
            <person name="Ecker J.R."/>
        </authorList>
    </citation>
    <scope>NUCLEOTIDE SEQUENCE [LARGE SCALE MRNA]</scope>
    <source>
        <strain>cv. Columbia</strain>
    </source>
</reference>
<reference key="4">
    <citation type="journal article" date="2004" name="Plant Physiol.">
        <title>The GATA family of transcription factors in Arabidopsis and rice.</title>
        <authorList>
            <person name="Reyes J.C."/>
            <person name="Muro-Pastor M.I."/>
            <person name="Florencio F.J."/>
        </authorList>
    </citation>
    <scope>GENE FAMILY ORGANIZATION</scope>
</reference>
<accession>Q9FJ10</accession>
<accession>A0JPW8</accession>
<feature type="chain" id="PRO_0000083452" description="GATA transcription factor 16">
    <location>
        <begin position="1"/>
        <end position="139"/>
    </location>
</feature>
<feature type="zinc finger region" description="GATA-type" evidence="2">
    <location>
        <begin position="32"/>
        <end position="86"/>
    </location>
</feature>
<feature type="region of interest" description="Disordered" evidence="3">
    <location>
        <begin position="67"/>
        <end position="98"/>
    </location>
</feature>
<gene>
    <name type="primary">GATA16</name>
    <name type="ordered locus">At5g49300</name>
    <name type="ORF">K21P3.18</name>
</gene>
<sequence length="139" mass="15322">MLDHSEKVLLVDSETMKTRAEDMIEQNNTSVNDKKKTCADCGTSKTPLWRGGPVGPKSLCNACGIRNRKKRRGGTEDNKKLKKSSSGGGNRKFGESLKQSLMDLGIRKRSTVEKQRQKLGEEEQAAVLLMALSYGSVYA</sequence>
<proteinExistence type="evidence at transcript level"/>
<organism>
    <name type="scientific">Arabidopsis thaliana</name>
    <name type="common">Mouse-ear cress</name>
    <dbReference type="NCBI Taxonomy" id="3702"/>
    <lineage>
        <taxon>Eukaryota</taxon>
        <taxon>Viridiplantae</taxon>
        <taxon>Streptophyta</taxon>
        <taxon>Embryophyta</taxon>
        <taxon>Tracheophyta</taxon>
        <taxon>Spermatophyta</taxon>
        <taxon>Magnoliopsida</taxon>
        <taxon>eudicotyledons</taxon>
        <taxon>Gunneridae</taxon>
        <taxon>Pentapetalae</taxon>
        <taxon>rosids</taxon>
        <taxon>malvids</taxon>
        <taxon>Brassicales</taxon>
        <taxon>Brassicaceae</taxon>
        <taxon>Camelineae</taxon>
        <taxon>Arabidopsis</taxon>
    </lineage>
</organism>
<comment type="function">
    <text evidence="1">Transcriptional regulator that specifically binds 5'-GATA-3' or 5'-GAT-3' motifs within gene promoters.</text>
</comment>
<comment type="subcellular location">
    <subcellularLocation>
        <location evidence="4">Nucleus</location>
    </subcellularLocation>
</comment>
<comment type="similarity">
    <text evidence="4">Belongs to the type IV zinc-finger family. Class B subfamily.</text>
</comment>